<accession>Q980F8</accession>
<feature type="chain" id="PRO_0000121565" description="DNA-binding protein SSO0352">
    <location>
        <begin position="1"/>
        <end position="118"/>
    </location>
</feature>
<feature type="helix" evidence="2">
    <location>
        <begin position="9"/>
        <end position="48"/>
    </location>
</feature>
<feature type="helix" evidence="2">
    <location>
        <begin position="51"/>
        <end position="63"/>
    </location>
</feature>
<feature type="helix" evidence="2">
    <location>
        <begin position="65"/>
        <end position="81"/>
    </location>
</feature>
<feature type="strand" evidence="2">
    <location>
        <begin position="86"/>
        <end position="88"/>
    </location>
</feature>
<feature type="helix" evidence="2">
    <location>
        <begin position="90"/>
        <end position="105"/>
    </location>
</feature>
<organism>
    <name type="scientific">Saccharolobus solfataricus (strain ATCC 35092 / DSM 1617 / JCM 11322 / P2)</name>
    <name type="common">Sulfolobus solfataricus</name>
    <dbReference type="NCBI Taxonomy" id="273057"/>
    <lineage>
        <taxon>Archaea</taxon>
        <taxon>Thermoproteota</taxon>
        <taxon>Thermoprotei</taxon>
        <taxon>Sulfolobales</taxon>
        <taxon>Sulfolobaceae</taxon>
        <taxon>Saccharolobus</taxon>
    </lineage>
</organism>
<keyword id="KW-0002">3D-structure</keyword>
<keyword id="KW-0238">DNA-binding</keyword>
<keyword id="KW-1185">Reference proteome</keyword>
<reference key="1">
    <citation type="journal article" date="2001" name="Proc. Natl. Acad. Sci. U.S.A.">
        <title>The complete genome of the crenarchaeon Sulfolobus solfataricus P2.</title>
        <authorList>
            <person name="She Q."/>
            <person name="Singh R.K."/>
            <person name="Confalonieri F."/>
            <person name="Zivanovic Y."/>
            <person name="Allard G."/>
            <person name="Awayez M.J."/>
            <person name="Chan-Weiher C.C.-Y."/>
            <person name="Clausen I.G."/>
            <person name="Curtis B.A."/>
            <person name="De Moors A."/>
            <person name="Erauso G."/>
            <person name="Fletcher C."/>
            <person name="Gordon P.M.K."/>
            <person name="Heikamp-de Jong I."/>
            <person name="Jeffries A.C."/>
            <person name="Kozera C.J."/>
            <person name="Medina N."/>
            <person name="Peng X."/>
            <person name="Thi-Ngoc H.P."/>
            <person name="Redder P."/>
            <person name="Schenk M.E."/>
            <person name="Theriault C."/>
            <person name="Tolstrup N."/>
            <person name="Charlebois R.L."/>
            <person name="Doolittle W.F."/>
            <person name="Duguet M."/>
            <person name="Gaasterland T."/>
            <person name="Garrett R.A."/>
            <person name="Ragan M.A."/>
            <person name="Sensen C.W."/>
            <person name="Van der Oost J."/>
        </authorList>
    </citation>
    <scope>NUCLEOTIDE SEQUENCE [LARGE SCALE GENOMIC DNA]</scope>
    <source>
        <strain>ATCC 35092 / DSM 1617 / JCM 11322 / P2</strain>
    </source>
</reference>
<evidence type="ECO:0000255" key="1">
    <source>
        <dbReference type="HAMAP-Rule" id="MF_00026"/>
    </source>
</evidence>
<evidence type="ECO:0007829" key="2">
    <source>
        <dbReference type="PDB" id="6IQC"/>
    </source>
</evidence>
<name>Y352_SACS2</name>
<proteinExistence type="evidence at protein level"/>
<comment type="similarity">
    <text evidence="1">Belongs to the PDCD5 family.</text>
</comment>
<sequence>MSTPNSYDDEELEELLRRKAAQEQKRIEEERKRKAELESQKESILRVILTPEARQRLTNIKLVKPEFAESLENQLIALAQSGRIKIPITDEELKQILEQISQQNRRDFKIQIRERGWK</sequence>
<gene>
    <name type="ordered locus">SSO0352</name>
</gene>
<dbReference type="EMBL" id="AE006641">
    <property type="protein sequence ID" value="AAK40684.1"/>
    <property type="molecule type" value="Genomic_DNA"/>
</dbReference>
<dbReference type="PIR" id="E90178">
    <property type="entry name" value="E90178"/>
</dbReference>
<dbReference type="RefSeq" id="WP_009990649.1">
    <property type="nucleotide sequence ID" value="NC_002754.1"/>
</dbReference>
<dbReference type="PDB" id="6IQC">
    <property type="method" value="X-ray"/>
    <property type="resolution" value="1.49 A"/>
    <property type="chains" value="A=1-118"/>
</dbReference>
<dbReference type="PDB" id="6IQO">
    <property type="method" value="X-ray"/>
    <property type="resolution" value="2.11 A"/>
    <property type="chains" value="A/B=1-118"/>
</dbReference>
<dbReference type="PDBsum" id="6IQC"/>
<dbReference type="PDBsum" id="6IQO"/>
<dbReference type="SMR" id="Q980F8"/>
<dbReference type="FunCoup" id="Q980F8">
    <property type="interactions" value="117"/>
</dbReference>
<dbReference type="STRING" id="273057.SSO0352"/>
<dbReference type="PaxDb" id="273057-SSO0352"/>
<dbReference type="EnsemblBacteria" id="AAK40684">
    <property type="protein sequence ID" value="AAK40684"/>
    <property type="gene ID" value="SSO0352"/>
</dbReference>
<dbReference type="KEGG" id="sso:SSO0352"/>
<dbReference type="PATRIC" id="fig|273057.12.peg.345"/>
<dbReference type="eggNOG" id="arCOG04179">
    <property type="taxonomic scope" value="Archaea"/>
</dbReference>
<dbReference type="HOGENOM" id="CLU_122978_3_0_2"/>
<dbReference type="InParanoid" id="Q980F8"/>
<dbReference type="PhylomeDB" id="Q980F8"/>
<dbReference type="Proteomes" id="UP000001974">
    <property type="component" value="Chromosome"/>
</dbReference>
<dbReference type="GO" id="GO:0005829">
    <property type="term" value="C:cytosol"/>
    <property type="evidence" value="ECO:0000318"/>
    <property type="project" value="GO_Central"/>
</dbReference>
<dbReference type="GO" id="GO:0003677">
    <property type="term" value="F:DNA binding"/>
    <property type="evidence" value="ECO:0007669"/>
    <property type="project" value="UniProtKB-UniRule"/>
</dbReference>
<dbReference type="FunFam" id="1.10.8.140:FF:000004">
    <property type="entry name" value="DNA-binding protein PAE3044"/>
    <property type="match status" value="1"/>
</dbReference>
<dbReference type="Gene3D" id="1.10.8.140">
    <property type="entry name" value="PDCD5-like"/>
    <property type="match status" value="1"/>
</dbReference>
<dbReference type="HAMAP" id="MF_00026">
    <property type="entry name" value="dsDNA_bind"/>
    <property type="match status" value="1"/>
</dbReference>
<dbReference type="InterPro" id="IPR022889">
    <property type="entry name" value="DNA_bind_arc"/>
</dbReference>
<dbReference type="InterPro" id="IPR002836">
    <property type="entry name" value="PDCD5-like"/>
</dbReference>
<dbReference type="InterPro" id="IPR036883">
    <property type="entry name" value="PDCD5-like_sf"/>
</dbReference>
<dbReference type="NCBIfam" id="NF003268">
    <property type="entry name" value="PRK04239.1"/>
    <property type="match status" value="1"/>
</dbReference>
<dbReference type="PANTHER" id="PTHR10840">
    <property type="entry name" value="PROGRAMMED CELL DEATH PROTEIN 5"/>
    <property type="match status" value="1"/>
</dbReference>
<dbReference type="PANTHER" id="PTHR10840:SF0">
    <property type="entry name" value="PROGRAMMED CELL DEATH PROTEIN 5"/>
    <property type="match status" value="1"/>
</dbReference>
<dbReference type="Pfam" id="PF01984">
    <property type="entry name" value="dsDNA_bind"/>
    <property type="match status" value="1"/>
</dbReference>
<dbReference type="PIRSF" id="PIRSF015730">
    <property type="entry name" value="TFAR19"/>
    <property type="match status" value="1"/>
</dbReference>
<dbReference type="SUPFAM" id="SSF46950">
    <property type="entry name" value="Double-stranded DNA-binding domain"/>
    <property type="match status" value="1"/>
</dbReference>
<protein>
    <recommendedName>
        <fullName evidence="1">DNA-binding protein SSO0352</fullName>
    </recommendedName>
</protein>